<organism>
    <name type="scientific">Prosthecochloris aestuarii (strain DSM 271 / SK 413)</name>
    <dbReference type="NCBI Taxonomy" id="290512"/>
    <lineage>
        <taxon>Bacteria</taxon>
        <taxon>Pseudomonadati</taxon>
        <taxon>Chlorobiota</taxon>
        <taxon>Chlorobiia</taxon>
        <taxon>Chlorobiales</taxon>
        <taxon>Chlorobiaceae</taxon>
        <taxon>Prosthecochloris</taxon>
    </lineage>
</organism>
<protein>
    <recommendedName>
        <fullName evidence="1">Small ribosomal subunit protein uS19</fullName>
    </recommendedName>
    <alternativeName>
        <fullName evidence="3">30S ribosomal protein S19</fullName>
    </alternativeName>
</protein>
<sequence length="98" mass="10869">MPRSLKKGPFIEGKLEKRILDMNSREEKKVVKTWARSSMISPDFVGHTVAVHNGKTHVPVYISENMVGHKLGEFAPTRTYRGHAGGKAEKGGSAPKRK</sequence>
<proteinExistence type="inferred from homology"/>
<gene>
    <name evidence="1" type="primary">rpsS</name>
    <name type="ordered locus">Paes_2060</name>
</gene>
<name>RS19_PROA2</name>
<accession>B4S5M3</accession>
<reference key="1">
    <citation type="submission" date="2008-06" db="EMBL/GenBank/DDBJ databases">
        <title>Complete sequence of chromosome of Prosthecochloris aestuarii DSM 271.</title>
        <authorList>
            <consortium name="US DOE Joint Genome Institute"/>
            <person name="Lucas S."/>
            <person name="Copeland A."/>
            <person name="Lapidus A."/>
            <person name="Glavina del Rio T."/>
            <person name="Dalin E."/>
            <person name="Tice H."/>
            <person name="Bruce D."/>
            <person name="Goodwin L."/>
            <person name="Pitluck S."/>
            <person name="Schmutz J."/>
            <person name="Larimer F."/>
            <person name="Land M."/>
            <person name="Hauser L."/>
            <person name="Kyrpides N."/>
            <person name="Anderson I."/>
            <person name="Liu Z."/>
            <person name="Li T."/>
            <person name="Zhao F."/>
            <person name="Overmann J."/>
            <person name="Bryant D.A."/>
            <person name="Richardson P."/>
        </authorList>
    </citation>
    <scope>NUCLEOTIDE SEQUENCE [LARGE SCALE GENOMIC DNA]</scope>
    <source>
        <strain>DSM 271 / SK 413</strain>
    </source>
</reference>
<feature type="chain" id="PRO_1000128018" description="Small ribosomal subunit protein uS19">
    <location>
        <begin position="1"/>
        <end position="98"/>
    </location>
</feature>
<feature type="region of interest" description="Disordered" evidence="2">
    <location>
        <begin position="77"/>
        <end position="98"/>
    </location>
</feature>
<dbReference type="EMBL" id="CP001108">
    <property type="protein sequence ID" value="ACF47070.1"/>
    <property type="molecule type" value="Genomic_DNA"/>
</dbReference>
<dbReference type="RefSeq" id="WP_012506602.1">
    <property type="nucleotide sequence ID" value="NC_011059.1"/>
</dbReference>
<dbReference type="SMR" id="B4S5M3"/>
<dbReference type="STRING" id="290512.Paes_2060"/>
<dbReference type="KEGG" id="paa:Paes_2060"/>
<dbReference type="eggNOG" id="COG0185">
    <property type="taxonomic scope" value="Bacteria"/>
</dbReference>
<dbReference type="HOGENOM" id="CLU_144911_0_1_10"/>
<dbReference type="Proteomes" id="UP000002725">
    <property type="component" value="Chromosome"/>
</dbReference>
<dbReference type="GO" id="GO:0005737">
    <property type="term" value="C:cytoplasm"/>
    <property type="evidence" value="ECO:0007669"/>
    <property type="project" value="UniProtKB-ARBA"/>
</dbReference>
<dbReference type="GO" id="GO:0015935">
    <property type="term" value="C:small ribosomal subunit"/>
    <property type="evidence" value="ECO:0007669"/>
    <property type="project" value="InterPro"/>
</dbReference>
<dbReference type="GO" id="GO:0019843">
    <property type="term" value="F:rRNA binding"/>
    <property type="evidence" value="ECO:0007669"/>
    <property type="project" value="UniProtKB-UniRule"/>
</dbReference>
<dbReference type="GO" id="GO:0003735">
    <property type="term" value="F:structural constituent of ribosome"/>
    <property type="evidence" value="ECO:0007669"/>
    <property type="project" value="InterPro"/>
</dbReference>
<dbReference type="GO" id="GO:0000028">
    <property type="term" value="P:ribosomal small subunit assembly"/>
    <property type="evidence" value="ECO:0007669"/>
    <property type="project" value="TreeGrafter"/>
</dbReference>
<dbReference type="GO" id="GO:0006412">
    <property type="term" value="P:translation"/>
    <property type="evidence" value="ECO:0007669"/>
    <property type="project" value="UniProtKB-UniRule"/>
</dbReference>
<dbReference type="FunFam" id="3.30.860.10:FF:000001">
    <property type="entry name" value="30S ribosomal protein S19"/>
    <property type="match status" value="1"/>
</dbReference>
<dbReference type="Gene3D" id="3.30.860.10">
    <property type="entry name" value="30s Ribosomal Protein S19, Chain A"/>
    <property type="match status" value="1"/>
</dbReference>
<dbReference type="HAMAP" id="MF_00531">
    <property type="entry name" value="Ribosomal_uS19"/>
    <property type="match status" value="1"/>
</dbReference>
<dbReference type="InterPro" id="IPR002222">
    <property type="entry name" value="Ribosomal_uS19"/>
</dbReference>
<dbReference type="InterPro" id="IPR005732">
    <property type="entry name" value="Ribosomal_uS19_bac-type"/>
</dbReference>
<dbReference type="InterPro" id="IPR020934">
    <property type="entry name" value="Ribosomal_uS19_CS"/>
</dbReference>
<dbReference type="InterPro" id="IPR023575">
    <property type="entry name" value="Ribosomal_uS19_SF"/>
</dbReference>
<dbReference type="NCBIfam" id="TIGR01050">
    <property type="entry name" value="rpsS_bact"/>
    <property type="match status" value="1"/>
</dbReference>
<dbReference type="PANTHER" id="PTHR11880">
    <property type="entry name" value="RIBOSOMAL PROTEIN S19P FAMILY MEMBER"/>
    <property type="match status" value="1"/>
</dbReference>
<dbReference type="PANTHER" id="PTHR11880:SF8">
    <property type="entry name" value="SMALL RIBOSOMAL SUBUNIT PROTEIN US19M"/>
    <property type="match status" value="1"/>
</dbReference>
<dbReference type="Pfam" id="PF00203">
    <property type="entry name" value="Ribosomal_S19"/>
    <property type="match status" value="1"/>
</dbReference>
<dbReference type="PIRSF" id="PIRSF002144">
    <property type="entry name" value="Ribosomal_S19"/>
    <property type="match status" value="1"/>
</dbReference>
<dbReference type="PRINTS" id="PR00975">
    <property type="entry name" value="RIBOSOMALS19"/>
</dbReference>
<dbReference type="SUPFAM" id="SSF54570">
    <property type="entry name" value="Ribosomal protein S19"/>
    <property type="match status" value="1"/>
</dbReference>
<dbReference type="PROSITE" id="PS00323">
    <property type="entry name" value="RIBOSOMAL_S19"/>
    <property type="match status" value="1"/>
</dbReference>
<evidence type="ECO:0000255" key="1">
    <source>
        <dbReference type="HAMAP-Rule" id="MF_00531"/>
    </source>
</evidence>
<evidence type="ECO:0000256" key="2">
    <source>
        <dbReference type="SAM" id="MobiDB-lite"/>
    </source>
</evidence>
<evidence type="ECO:0000305" key="3"/>
<comment type="function">
    <text evidence="1">Protein S19 forms a complex with S13 that binds strongly to the 16S ribosomal RNA.</text>
</comment>
<comment type="similarity">
    <text evidence="1">Belongs to the universal ribosomal protein uS19 family.</text>
</comment>
<keyword id="KW-0687">Ribonucleoprotein</keyword>
<keyword id="KW-0689">Ribosomal protein</keyword>
<keyword id="KW-0694">RNA-binding</keyword>
<keyword id="KW-0699">rRNA-binding</keyword>